<dbReference type="EC" id="4.1.1.48" evidence="1"/>
<dbReference type="EMBL" id="CP001280">
    <property type="protein sequence ID" value="ACK49475.1"/>
    <property type="molecule type" value="Genomic_DNA"/>
</dbReference>
<dbReference type="RefSeq" id="WP_012589545.1">
    <property type="nucleotide sequence ID" value="NC_011666.1"/>
</dbReference>
<dbReference type="SMR" id="B8EJS1"/>
<dbReference type="STRING" id="395965.Msil_0503"/>
<dbReference type="KEGG" id="msl:Msil_0503"/>
<dbReference type="eggNOG" id="COG0134">
    <property type="taxonomic scope" value="Bacteria"/>
</dbReference>
<dbReference type="HOGENOM" id="CLU_034247_2_0_5"/>
<dbReference type="OrthoDB" id="9804217at2"/>
<dbReference type="UniPathway" id="UPA00035">
    <property type="reaction ID" value="UER00043"/>
</dbReference>
<dbReference type="Proteomes" id="UP000002257">
    <property type="component" value="Chromosome"/>
</dbReference>
<dbReference type="GO" id="GO:0004425">
    <property type="term" value="F:indole-3-glycerol-phosphate synthase activity"/>
    <property type="evidence" value="ECO:0007669"/>
    <property type="project" value="UniProtKB-UniRule"/>
</dbReference>
<dbReference type="GO" id="GO:0004640">
    <property type="term" value="F:phosphoribosylanthranilate isomerase activity"/>
    <property type="evidence" value="ECO:0007669"/>
    <property type="project" value="TreeGrafter"/>
</dbReference>
<dbReference type="GO" id="GO:0000162">
    <property type="term" value="P:L-tryptophan biosynthetic process"/>
    <property type="evidence" value="ECO:0007669"/>
    <property type="project" value="UniProtKB-UniRule"/>
</dbReference>
<dbReference type="CDD" id="cd00331">
    <property type="entry name" value="IGPS"/>
    <property type="match status" value="1"/>
</dbReference>
<dbReference type="FunFam" id="3.20.20.70:FF:000024">
    <property type="entry name" value="Indole-3-glycerol phosphate synthase"/>
    <property type="match status" value="1"/>
</dbReference>
<dbReference type="Gene3D" id="3.20.20.70">
    <property type="entry name" value="Aldolase class I"/>
    <property type="match status" value="1"/>
</dbReference>
<dbReference type="HAMAP" id="MF_00134_B">
    <property type="entry name" value="IGPS_B"/>
    <property type="match status" value="1"/>
</dbReference>
<dbReference type="InterPro" id="IPR013785">
    <property type="entry name" value="Aldolase_TIM"/>
</dbReference>
<dbReference type="InterPro" id="IPR045186">
    <property type="entry name" value="Indole-3-glycerol_P_synth"/>
</dbReference>
<dbReference type="InterPro" id="IPR013798">
    <property type="entry name" value="Indole-3-glycerol_P_synth_dom"/>
</dbReference>
<dbReference type="InterPro" id="IPR001468">
    <property type="entry name" value="Indole-3-GlycerolPSynthase_CS"/>
</dbReference>
<dbReference type="InterPro" id="IPR011060">
    <property type="entry name" value="RibuloseP-bd_barrel"/>
</dbReference>
<dbReference type="NCBIfam" id="NF001370">
    <property type="entry name" value="PRK00278.1-2"/>
    <property type="match status" value="1"/>
</dbReference>
<dbReference type="NCBIfam" id="NF001373">
    <property type="entry name" value="PRK00278.1-6"/>
    <property type="match status" value="1"/>
</dbReference>
<dbReference type="NCBIfam" id="NF001377">
    <property type="entry name" value="PRK00278.2-4"/>
    <property type="match status" value="1"/>
</dbReference>
<dbReference type="PANTHER" id="PTHR22854:SF2">
    <property type="entry name" value="INDOLE-3-GLYCEROL-PHOSPHATE SYNTHASE"/>
    <property type="match status" value="1"/>
</dbReference>
<dbReference type="PANTHER" id="PTHR22854">
    <property type="entry name" value="TRYPTOPHAN BIOSYNTHESIS PROTEIN"/>
    <property type="match status" value="1"/>
</dbReference>
<dbReference type="Pfam" id="PF00218">
    <property type="entry name" value="IGPS"/>
    <property type="match status" value="1"/>
</dbReference>
<dbReference type="SUPFAM" id="SSF51366">
    <property type="entry name" value="Ribulose-phoshate binding barrel"/>
    <property type="match status" value="1"/>
</dbReference>
<dbReference type="PROSITE" id="PS00614">
    <property type="entry name" value="IGPS"/>
    <property type="match status" value="1"/>
</dbReference>
<keyword id="KW-0028">Amino-acid biosynthesis</keyword>
<keyword id="KW-0057">Aromatic amino acid biosynthesis</keyword>
<keyword id="KW-0210">Decarboxylase</keyword>
<keyword id="KW-0456">Lyase</keyword>
<keyword id="KW-1185">Reference proteome</keyword>
<keyword id="KW-0822">Tryptophan biosynthesis</keyword>
<evidence type="ECO:0000255" key="1">
    <source>
        <dbReference type="HAMAP-Rule" id="MF_00134"/>
    </source>
</evidence>
<organism>
    <name type="scientific">Methylocella silvestris (strain DSM 15510 / CIP 108128 / LMG 27833 / NCIMB 13906 / BL2)</name>
    <dbReference type="NCBI Taxonomy" id="395965"/>
    <lineage>
        <taxon>Bacteria</taxon>
        <taxon>Pseudomonadati</taxon>
        <taxon>Pseudomonadota</taxon>
        <taxon>Alphaproteobacteria</taxon>
        <taxon>Hyphomicrobiales</taxon>
        <taxon>Beijerinckiaceae</taxon>
        <taxon>Methylocella</taxon>
    </lineage>
</organism>
<accession>B8EJS1</accession>
<protein>
    <recommendedName>
        <fullName evidence="1">Indole-3-glycerol phosphate synthase</fullName>
        <shortName evidence="1">IGPS</shortName>
        <ecNumber evidence="1">4.1.1.48</ecNumber>
    </recommendedName>
</protein>
<sequence length="276" mass="30334">MTDILKSIALYKRREIAQAKVRMPFETLERKAHDHDPPRGFVKAIEAKHAVNQLALIAEMKKASPSKGLIRADFDPPALARAYEEGGAACLSVLTDGPSFQGDLSFLEAARAATHLPCLRKDFLFDPYQVYEARANGADCVLIIMACVDDEEAGQLTRAAHDLAMDILVEVHDEAELTRALRLETRLVGVNNRDLRTFETSLELTERLAEKIPSDRIAVSESGIASHQDCLRLKAHGVSTFLVGESLMRQKDVAAATKDLLIGKLPPLHGKHAHGL</sequence>
<comment type="catalytic activity">
    <reaction evidence="1">
        <text>1-(2-carboxyphenylamino)-1-deoxy-D-ribulose 5-phosphate + H(+) = (1S,2R)-1-C-(indol-3-yl)glycerol 3-phosphate + CO2 + H2O</text>
        <dbReference type="Rhea" id="RHEA:23476"/>
        <dbReference type="ChEBI" id="CHEBI:15377"/>
        <dbReference type="ChEBI" id="CHEBI:15378"/>
        <dbReference type="ChEBI" id="CHEBI:16526"/>
        <dbReference type="ChEBI" id="CHEBI:58613"/>
        <dbReference type="ChEBI" id="CHEBI:58866"/>
        <dbReference type="EC" id="4.1.1.48"/>
    </reaction>
</comment>
<comment type="pathway">
    <text evidence="1">Amino-acid biosynthesis; L-tryptophan biosynthesis; L-tryptophan from chorismate: step 4/5.</text>
</comment>
<comment type="similarity">
    <text evidence="1">Belongs to the TrpC family.</text>
</comment>
<feature type="chain" id="PRO_1000198778" description="Indole-3-glycerol phosphate synthase">
    <location>
        <begin position="1"/>
        <end position="276"/>
    </location>
</feature>
<gene>
    <name evidence="1" type="primary">trpC</name>
    <name type="ordered locus">Msil_0503</name>
</gene>
<name>TRPC_METSB</name>
<proteinExistence type="inferred from homology"/>
<reference key="1">
    <citation type="journal article" date="2010" name="J. Bacteriol.">
        <title>Complete genome sequence of the aerobic facultative methanotroph Methylocella silvestris BL2.</title>
        <authorList>
            <person name="Chen Y."/>
            <person name="Crombie A."/>
            <person name="Rahman M.T."/>
            <person name="Dedysh S.N."/>
            <person name="Liesack W."/>
            <person name="Stott M.B."/>
            <person name="Alam M."/>
            <person name="Theisen A.R."/>
            <person name="Murrell J.C."/>
            <person name="Dunfield P.F."/>
        </authorList>
    </citation>
    <scope>NUCLEOTIDE SEQUENCE [LARGE SCALE GENOMIC DNA]</scope>
    <source>
        <strain>DSM 15510 / CIP 108128 / LMG 27833 / NCIMB 13906 / BL2</strain>
    </source>
</reference>